<protein>
    <recommendedName>
        <fullName evidence="3">Probable 3-ketoacyl-CoA thiolase</fullName>
        <ecNumber evidence="1">2.3.1.16</ecNumber>
    </recommendedName>
    <alternativeName>
        <fullName evidence="4">Hydroxyacyl-CoA dehydrogenase trifunctional multienzyme complex subunit beta 1</fullName>
    </alternativeName>
</protein>
<sequence length="448" mass="47874">MLRAVSTSFGTARAASAVAKKNMPNIVLVDAVRTPFVVSGTVFKDLMAVDLQKEAIKALVEKTKLPYEQLDHIICGTVIQECKTSNIAREAALLAGVPDKIPAHTVTLACISSNVAMTTGMGMLATGNANAIIAGGVELLSDVPIRYNRNARKAMLGMNKAKDVPSKLKIGGQIVKNLLSPELPAVAEFSTGETMGHSGDRLAAAFNVSRREQDEFAIRSHTLASEAAKNGKFTDVVPVFLDGKKPKTIKEDNGIRVSTLEKLSSLKPAFVKPHGTVTAANASYLTDGASAALIMTEEYALANGYKPKAYLRDYLYVAQDPKDQLLLSPAYVIPKLLDKAGLTLKDVDVFEIHEAFAGQVLANLNAMDSDYFCKEQMKRSGKFGRVPMDKLNLWGGSLSIGHPFGATGVRLATHSAHRLKEEKGQYAVIAACAAGGHGVGMLIEAYGK</sequence>
<reference key="1">
    <citation type="journal article" date="1992" name="Nature">
        <title>The C. elegans genome sequencing project: a beginning.</title>
        <authorList>
            <person name="Sulston J."/>
            <person name="Du Z."/>
            <person name="Thomas K."/>
            <person name="Wilson R."/>
            <person name="Hillier L."/>
            <person name="Staden R."/>
            <person name="Halloran N."/>
            <person name="Green P."/>
            <person name="Thierry-Mieg J."/>
            <person name="Qiu L."/>
            <person name="Dear S."/>
            <person name="Coulson A."/>
            <person name="Craxton M."/>
            <person name="Durbin R."/>
            <person name="Berks M."/>
            <person name="Metzstein M."/>
            <person name="Hawkins T."/>
            <person name="Ainscough R."/>
            <person name="Waterston R."/>
        </authorList>
    </citation>
    <scope>NUCLEOTIDE SEQUENCE [LARGE SCALE GENOMIC DNA]</scope>
    <source>
        <strain>Bristol N2</strain>
    </source>
</reference>
<reference key="2">
    <citation type="journal article" date="1998" name="Science">
        <title>Genome sequence of the nematode C. elegans: a platform for investigating biology.</title>
        <authorList>
            <consortium name="The C. elegans sequencing consortium"/>
        </authorList>
    </citation>
    <scope>NUCLEOTIDE SEQUENCE [LARGE SCALE GENOMIC DNA]</scope>
    <source>
        <strain>Bristol N2</strain>
    </source>
</reference>
<gene>
    <name evidence="4" type="primary">hadb-1</name>
    <name evidence="4" type="ORF">B0303.3</name>
</gene>
<organism>
    <name type="scientific">Caenorhabditis elegans</name>
    <dbReference type="NCBI Taxonomy" id="6239"/>
    <lineage>
        <taxon>Eukaryota</taxon>
        <taxon>Metazoa</taxon>
        <taxon>Ecdysozoa</taxon>
        <taxon>Nematoda</taxon>
        <taxon>Chromadorea</taxon>
        <taxon>Rhabditida</taxon>
        <taxon>Rhabditina</taxon>
        <taxon>Rhabditomorpha</taxon>
        <taxon>Rhabditoidea</taxon>
        <taxon>Rhabditidae</taxon>
        <taxon>Peloderinae</taxon>
        <taxon>Caenorhabditis</taxon>
    </lineage>
</organism>
<keyword id="KW-0012">Acyltransferase</keyword>
<keyword id="KW-0276">Fatty acid metabolism</keyword>
<keyword id="KW-0443">Lipid metabolism</keyword>
<keyword id="KW-0496">Mitochondrion</keyword>
<keyword id="KW-1185">Reference proteome</keyword>
<keyword id="KW-0808">Transferase</keyword>
<evidence type="ECO:0000250" key="1">
    <source>
        <dbReference type="UniProtKB" id="P55084"/>
    </source>
</evidence>
<evidence type="ECO:0000255" key="2">
    <source>
        <dbReference type="PROSITE-ProRule" id="PRU10020"/>
    </source>
</evidence>
<evidence type="ECO:0000305" key="3"/>
<evidence type="ECO:0000312" key="4">
    <source>
        <dbReference type="WormBase" id="B0303.3"/>
    </source>
</evidence>
<accession>P34255</accession>
<name>ECHH_CAEEL</name>
<proteinExistence type="inferred from homology"/>
<comment type="function">
    <text evidence="3">Mitochondrial enzyme that catalyzes reactions of the mitochondrial beta-oxidation pathway.</text>
</comment>
<comment type="catalytic activity">
    <reaction evidence="1">
        <text>an acyl-CoA + acetyl-CoA = a 3-oxoacyl-CoA + CoA</text>
        <dbReference type="Rhea" id="RHEA:21564"/>
        <dbReference type="ChEBI" id="CHEBI:57287"/>
        <dbReference type="ChEBI" id="CHEBI:57288"/>
        <dbReference type="ChEBI" id="CHEBI:58342"/>
        <dbReference type="ChEBI" id="CHEBI:90726"/>
        <dbReference type="EC" id="2.3.1.16"/>
    </reaction>
</comment>
<comment type="pathway">
    <text evidence="1">Lipid metabolism; fatty acid beta-oxidation.</text>
</comment>
<comment type="subcellular location">
    <subcellularLocation>
        <location evidence="1">Mitochondrion</location>
    </subcellularLocation>
</comment>
<comment type="similarity">
    <text evidence="3">Belongs to the thiolase-like superfamily. Thiolase family.</text>
</comment>
<dbReference type="EC" id="2.3.1.16" evidence="1"/>
<dbReference type="EMBL" id="BX284603">
    <property type="protein sequence ID" value="CCD61708.1"/>
    <property type="molecule type" value="Genomic_DNA"/>
</dbReference>
<dbReference type="PIR" id="S27785">
    <property type="entry name" value="S27785"/>
</dbReference>
<dbReference type="RefSeq" id="NP_498915.1">
    <property type="nucleotide sequence ID" value="NM_066514.8"/>
</dbReference>
<dbReference type="SMR" id="P34255"/>
<dbReference type="BioGRID" id="41419">
    <property type="interactions" value="13"/>
</dbReference>
<dbReference type="FunCoup" id="P34255">
    <property type="interactions" value="1241"/>
</dbReference>
<dbReference type="IntAct" id="P34255">
    <property type="interactions" value="1"/>
</dbReference>
<dbReference type="STRING" id="6239.B0303.3.2"/>
<dbReference type="PaxDb" id="6239-B0303.3.1"/>
<dbReference type="PeptideAtlas" id="P34255"/>
<dbReference type="EnsemblMetazoa" id="B0303.3.1">
    <property type="protein sequence ID" value="B0303.3.1"/>
    <property type="gene ID" value="WBGene00015125"/>
</dbReference>
<dbReference type="EnsemblMetazoa" id="B0303.3.2">
    <property type="protein sequence ID" value="B0303.3.2"/>
    <property type="gene ID" value="WBGene00015125"/>
</dbReference>
<dbReference type="GeneID" id="176216"/>
<dbReference type="KEGG" id="cel:CELE_B0303.3"/>
<dbReference type="UCSC" id="B0303.3.2">
    <property type="organism name" value="c. elegans"/>
</dbReference>
<dbReference type="AGR" id="WB:WBGene00015125"/>
<dbReference type="CTD" id="176216"/>
<dbReference type="WormBase" id="B0303.3">
    <property type="protein sequence ID" value="CE00561"/>
    <property type="gene ID" value="WBGene00015125"/>
    <property type="gene designation" value="hadb-1"/>
</dbReference>
<dbReference type="eggNOG" id="KOG1392">
    <property type="taxonomic scope" value="Eukaryota"/>
</dbReference>
<dbReference type="GeneTree" id="ENSGT01030000234626"/>
<dbReference type="HOGENOM" id="CLU_031026_2_0_1"/>
<dbReference type="InParanoid" id="P34255"/>
<dbReference type="OMA" id="MTAFPEP"/>
<dbReference type="OrthoDB" id="5404651at2759"/>
<dbReference type="PhylomeDB" id="P34255"/>
<dbReference type="Reactome" id="R-CEL-1482798">
    <property type="pathway name" value="Acyl chain remodeling of CL"/>
</dbReference>
<dbReference type="Reactome" id="R-CEL-77285">
    <property type="pathway name" value="Beta oxidation of myristoyl-CoA to lauroyl-CoA"/>
</dbReference>
<dbReference type="Reactome" id="R-CEL-77305">
    <property type="pathway name" value="Beta oxidation of palmitoyl-CoA to myristoyl-CoA"/>
</dbReference>
<dbReference type="Reactome" id="R-CEL-77310">
    <property type="pathway name" value="Beta oxidation of lauroyl-CoA to decanoyl-CoA-CoA"/>
</dbReference>
<dbReference type="Reactome" id="R-CEL-77346">
    <property type="pathway name" value="Beta oxidation of decanoyl-CoA to octanoyl-CoA-CoA"/>
</dbReference>
<dbReference type="Reactome" id="R-CEL-77348">
    <property type="pathway name" value="Beta oxidation of octanoyl-CoA to hexanoyl-CoA"/>
</dbReference>
<dbReference type="Reactome" id="R-CEL-77350">
    <property type="pathway name" value="Beta oxidation of hexanoyl-CoA to butanoyl-CoA"/>
</dbReference>
<dbReference type="UniPathway" id="UPA00659"/>
<dbReference type="PRO" id="PR:P34255"/>
<dbReference type="Proteomes" id="UP000001940">
    <property type="component" value="Chromosome III"/>
</dbReference>
<dbReference type="Bgee" id="WBGene00015125">
    <property type="expression patterns" value="Expressed in embryo and 4 other cell types or tissues"/>
</dbReference>
<dbReference type="GO" id="GO:0016507">
    <property type="term" value="C:mitochondrial fatty acid beta-oxidation multienzyme complex"/>
    <property type="evidence" value="ECO:0000318"/>
    <property type="project" value="GO_Central"/>
</dbReference>
<dbReference type="GO" id="GO:0005739">
    <property type="term" value="C:mitochondrion"/>
    <property type="evidence" value="ECO:0007005"/>
    <property type="project" value="WormBase"/>
</dbReference>
<dbReference type="GO" id="GO:0003985">
    <property type="term" value="F:acetyl-CoA C-acetyltransferase activity"/>
    <property type="evidence" value="ECO:0000318"/>
    <property type="project" value="GO_Central"/>
</dbReference>
<dbReference type="GO" id="GO:0006635">
    <property type="term" value="P:fatty acid beta-oxidation"/>
    <property type="evidence" value="ECO:0000318"/>
    <property type="project" value="GO_Central"/>
</dbReference>
<dbReference type="CDD" id="cd00751">
    <property type="entry name" value="thiolase"/>
    <property type="match status" value="1"/>
</dbReference>
<dbReference type="FunFam" id="3.40.47.10:FF:000098">
    <property type="entry name" value="Uncharacterized protein B0303.3"/>
    <property type="match status" value="1"/>
</dbReference>
<dbReference type="Gene3D" id="3.40.47.10">
    <property type="match status" value="1"/>
</dbReference>
<dbReference type="InterPro" id="IPR002155">
    <property type="entry name" value="Thiolase"/>
</dbReference>
<dbReference type="InterPro" id="IPR016039">
    <property type="entry name" value="Thiolase-like"/>
</dbReference>
<dbReference type="InterPro" id="IPR020615">
    <property type="entry name" value="Thiolase_acyl_enz_int_AS"/>
</dbReference>
<dbReference type="InterPro" id="IPR020610">
    <property type="entry name" value="Thiolase_AS"/>
</dbReference>
<dbReference type="InterPro" id="IPR020617">
    <property type="entry name" value="Thiolase_C"/>
</dbReference>
<dbReference type="InterPro" id="IPR020613">
    <property type="entry name" value="Thiolase_CS"/>
</dbReference>
<dbReference type="InterPro" id="IPR020616">
    <property type="entry name" value="Thiolase_N"/>
</dbReference>
<dbReference type="NCBIfam" id="TIGR01930">
    <property type="entry name" value="AcCoA-C-Actrans"/>
    <property type="match status" value="1"/>
</dbReference>
<dbReference type="PANTHER" id="PTHR18919">
    <property type="entry name" value="ACETYL-COA C-ACYLTRANSFERASE"/>
    <property type="match status" value="1"/>
</dbReference>
<dbReference type="PANTHER" id="PTHR18919:SF153">
    <property type="entry name" value="TRIFUNCTIONAL ENZYME SUBUNIT BETA, MITOCHONDRIAL"/>
    <property type="match status" value="1"/>
</dbReference>
<dbReference type="Pfam" id="PF02803">
    <property type="entry name" value="Thiolase_C"/>
    <property type="match status" value="1"/>
</dbReference>
<dbReference type="Pfam" id="PF00108">
    <property type="entry name" value="Thiolase_N"/>
    <property type="match status" value="1"/>
</dbReference>
<dbReference type="PIRSF" id="PIRSF000429">
    <property type="entry name" value="Ac-CoA_Ac_transf"/>
    <property type="match status" value="1"/>
</dbReference>
<dbReference type="SUPFAM" id="SSF53901">
    <property type="entry name" value="Thiolase-like"/>
    <property type="match status" value="1"/>
</dbReference>
<dbReference type="PROSITE" id="PS00098">
    <property type="entry name" value="THIOLASE_1"/>
    <property type="match status" value="1"/>
</dbReference>
<dbReference type="PROSITE" id="PS00737">
    <property type="entry name" value="THIOLASE_2"/>
    <property type="match status" value="1"/>
</dbReference>
<dbReference type="PROSITE" id="PS00099">
    <property type="entry name" value="THIOLASE_3"/>
    <property type="match status" value="1"/>
</dbReference>
<feature type="chain" id="PRO_0000206464" description="Probable 3-ketoacyl-CoA thiolase">
    <location>
        <begin position="1"/>
        <end position="448"/>
    </location>
</feature>
<feature type="active site" description="Acyl-thioester intermediate" evidence="1">
    <location>
        <position position="110"/>
    </location>
</feature>
<feature type="active site" description="Proton acceptor" evidence="2">
    <location>
        <position position="402"/>
    </location>
</feature>
<feature type="active site" description="Proton acceptor" evidence="2">
    <location>
        <position position="432"/>
    </location>
</feature>